<evidence type="ECO:0000255" key="1">
    <source>
        <dbReference type="HAMAP-Rule" id="MF_01345"/>
    </source>
</evidence>
<evidence type="ECO:0000305" key="2"/>
<protein>
    <recommendedName>
        <fullName evidence="1">Small ribosomal subunit protein uS17</fullName>
    </recommendedName>
    <alternativeName>
        <fullName evidence="2">30S ribosomal protein S17</fullName>
    </alternativeName>
</protein>
<dbReference type="EMBL" id="CP000423">
    <property type="protein sequence ID" value="ABJ71230.1"/>
    <property type="molecule type" value="Genomic_DNA"/>
</dbReference>
<dbReference type="RefSeq" id="WP_003567548.1">
    <property type="nucleotide sequence ID" value="NC_008526.1"/>
</dbReference>
<dbReference type="RefSeq" id="YP_807672.1">
    <property type="nucleotide sequence ID" value="NC_008526.1"/>
</dbReference>
<dbReference type="SMR" id="Q034Z2"/>
<dbReference type="STRING" id="321967.LSEI_2494"/>
<dbReference type="PaxDb" id="321967-LSEI_2494"/>
<dbReference type="GeneID" id="57091073"/>
<dbReference type="KEGG" id="lca:LSEI_2494"/>
<dbReference type="PATRIC" id="fig|321967.11.peg.2448"/>
<dbReference type="HOGENOM" id="CLU_073626_1_0_9"/>
<dbReference type="Proteomes" id="UP000001651">
    <property type="component" value="Chromosome"/>
</dbReference>
<dbReference type="GO" id="GO:0022627">
    <property type="term" value="C:cytosolic small ribosomal subunit"/>
    <property type="evidence" value="ECO:0007669"/>
    <property type="project" value="TreeGrafter"/>
</dbReference>
<dbReference type="GO" id="GO:0019843">
    <property type="term" value="F:rRNA binding"/>
    <property type="evidence" value="ECO:0007669"/>
    <property type="project" value="UniProtKB-UniRule"/>
</dbReference>
<dbReference type="GO" id="GO:0003735">
    <property type="term" value="F:structural constituent of ribosome"/>
    <property type="evidence" value="ECO:0007669"/>
    <property type="project" value="InterPro"/>
</dbReference>
<dbReference type="GO" id="GO:0006412">
    <property type="term" value="P:translation"/>
    <property type="evidence" value="ECO:0007669"/>
    <property type="project" value="UniProtKB-UniRule"/>
</dbReference>
<dbReference type="CDD" id="cd00364">
    <property type="entry name" value="Ribosomal_uS17"/>
    <property type="match status" value="1"/>
</dbReference>
<dbReference type="Gene3D" id="2.40.50.140">
    <property type="entry name" value="Nucleic acid-binding proteins"/>
    <property type="match status" value="1"/>
</dbReference>
<dbReference type="HAMAP" id="MF_01345_B">
    <property type="entry name" value="Ribosomal_uS17_B"/>
    <property type="match status" value="1"/>
</dbReference>
<dbReference type="InterPro" id="IPR012340">
    <property type="entry name" value="NA-bd_OB-fold"/>
</dbReference>
<dbReference type="InterPro" id="IPR000266">
    <property type="entry name" value="Ribosomal_uS17"/>
</dbReference>
<dbReference type="InterPro" id="IPR019984">
    <property type="entry name" value="Ribosomal_uS17_bact/chlr"/>
</dbReference>
<dbReference type="InterPro" id="IPR019979">
    <property type="entry name" value="Ribosomal_uS17_CS"/>
</dbReference>
<dbReference type="NCBIfam" id="NF004123">
    <property type="entry name" value="PRK05610.1"/>
    <property type="match status" value="1"/>
</dbReference>
<dbReference type="NCBIfam" id="TIGR03635">
    <property type="entry name" value="uS17_bact"/>
    <property type="match status" value="1"/>
</dbReference>
<dbReference type="PANTHER" id="PTHR10744">
    <property type="entry name" value="40S RIBOSOMAL PROTEIN S11 FAMILY MEMBER"/>
    <property type="match status" value="1"/>
</dbReference>
<dbReference type="PANTHER" id="PTHR10744:SF1">
    <property type="entry name" value="SMALL RIBOSOMAL SUBUNIT PROTEIN US17M"/>
    <property type="match status" value="1"/>
</dbReference>
<dbReference type="Pfam" id="PF00366">
    <property type="entry name" value="Ribosomal_S17"/>
    <property type="match status" value="1"/>
</dbReference>
<dbReference type="PRINTS" id="PR00973">
    <property type="entry name" value="RIBOSOMALS17"/>
</dbReference>
<dbReference type="SUPFAM" id="SSF50249">
    <property type="entry name" value="Nucleic acid-binding proteins"/>
    <property type="match status" value="1"/>
</dbReference>
<dbReference type="PROSITE" id="PS00056">
    <property type="entry name" value="RIBOSOMAL_S17"/>
    <property type="match status" value="1"/>
</dbReference>
<gene>
    <name evidence="1" type="primary">rpsQ</name>
    <name type="ordered locus">LSEI_2494</name>
</gene>
<feature type="chain" id="PRO_1000054967" description="Small ribosomal subunit protein uS17">
    <location>
        <begin position="1"/>
        <end position="87"/>
    </location>
</feature>
<keyword id="KW-1185">Reference proteome</keyword>
<keyword id="KW-0687">Ribonucleoprotein</keyword>
<keyword id="KW-0689">Ribosomal protein</keyword>
<keyword id="KW-0694">RNA-binding</keyword>
<keyword id="KW-0699">rRNA-binding</keyword>
<sequence>MAERNSRKVYQGRVVSDKMDKTITVEVSTVKMHPVYGKRMKYSKKYYVHDEDNTAKTGDIVRIAETRPLSRNKRFRLLNIVEKAVII</sequence>
<accession>Q034Z2</accession>
<proteinExistence type="inferred from homology"/>
<comment type="function">
    <text evidence="1">One of the primary rRNA binding proteins, it binds specifically to the 5'-end of 16S ribosomal RNA.</text>
</comment>
<comment type="subunit">
    <text evidence="1">Part of the 30S ribosomal subunit.</text>
</comment>
<comment type="similarity">
    <text evidence="1">Belongs to the universal ribosomal protein uS17 family.</text>
</comment>
<reference key="1">
    <citation type="journal article" date="2006" name="Proc. Natl. Acad. Sci. U.S.A.">
        <title>Comparative genomics of the lactic acid bacteria.</title>
        <authorList>
            <person name="Makarova K.S."/>
            <person name="Slesarev A."/>
            <person name="Wolf Y.I."/>
            <person name="Sorokin A."/>
            <person name="Mirkin B."/>
            <person name="Koonin E.V."/>
            <person name="Pavlov A."/>
            <person name="Pavlova N."/>
            <person name="Karamychev V."/>
            <person name="Polouchine N."/>
            <person name="Shakhova V."/>
            <person name="Grigoriev I."/>
            <person name="Lou Y."/>
            <person name="Rohksar D."/>
            <person name="Lucas S."/>
            <person name="Huang K."/>
            <person name="Goodstein D.M."/>
            <person name="Hawkins T."/>
            <person name="Plengvidhya V."/>
            <person name="Welker D."/>
            <person name="Hughes J."/>
            <person name="Goh Y."/>
            <person name="Benson A."/>
            <person name="Baldwin K."/>
            <person name="Lee J.-H."/>
            <person name="Diaz-Muniz I."/>
            <person name="Dosti B."/>
            <person name="Smeianov V."/>
            <person name="Wechter W."/>
            <person name="Barabote R."/>
            <person name="Lorca G."/>
            <person name="Altermann E."/>
            <person name="Barrangou R."/>
            <person name="Ganesan B."/>
            <person name="Xie Y."/>
            <person name="Rawsthorne H."/>
            <person name="Tamir D."/>
            <person name="Parker C."/>
            <person name="Breidt F."/>
            <person name="Broadbent J.R."/>
            <person name="Hutkins R."/>
            <person name="O'Sullivan D."/>
            <person name="Steele J."/>
            <person name="Unlu G."/>
            <person name="Saier M.H. Jr."/>
            <person name="Klaenhammer T."/>
            <person name="Richardson P."/>
            <person name="Kozyavkin S."/>
            <person name="Weimer B.C."/>
            <person name="Mills D.A."/>
        </authorList>
    </citation>
    <scope>NUCLEOTIDE SEQUENCE [LARGE SCALE GENOMIC DNA]</scope>
    <source>
        <strain>ATCC 334 / BCRC 17002 / CCUG 31169 / CIP 107868 / KCTC 3260 / NRRL B-441</strain>
    </source>
</reference>
<organism>
    <name type="scientific">Lacticaseibacillus paracasei (strain ATCC 334 / BCRC 17002 / CCUG 31169 / CIP 107868 / KCTC 3260 / NRRL B-441)</name>
    <name type="common">Lactobacillus paracasei</name>
    <dbReference type="NCBI Taxonomy" id="321967"/>
    <lineage>
        <taxon>Bacteria</taxon>
        <taxon>Bacillati</taxon>
        <taxon>Bacillota</taxon>
        <taxon>Bacilli</taxon>
        <taxon>Lactobacillales</taxon>
        <taxon>Lactobacillaceae</taxon>
        <taxon>Lacticaseibacillus</taxon>
    </lineage>
</organism>
<name>RS17_LACP3</name>